<reference key="1">
    <citation type="journal article" date="2003" name="Virology">
        <title>AFV1, a novel virus infecting hyperthermophilic archaea of the genus acidianus.</title>
        <authorList>
            <person name="Bettstetter M."/>
            <person name="Peng X."/>
            <person name="Garrett R.A."/>
            <person name="Prangishvili D."/>
        </authorList>
    </citation>
    <scope>NUCLEOTIDE SEQUENCE [GENOMIC DNA]</scope>
</reference>
<organismHost>
    <name type="scientific">Acidianus hospitalis</name>
    <dbReference type="NCBI Taxonomy" id="563177"/>
</organismHost>
<organismHost>
    <name type="scientific">Acidianus infernus</name>
    <dbReference type="NCBI Taxonomy" id="12915"/>
</organismHost>
<proteinExistence type="predicted"/>
<name>Y074_AFV1Y</name>
<feature type="chain" id="PRO_0000384544" description="Uncharacterized protein ORF74">
    <location>
        <begin position="1"/>
        <end position="74"/>
    </location>
</feature>
<keyword id="KW-1185">Reference proteome</keyword>
<sequence>MEKAEKYVKIGIDGYTYNLFKSEKDKWRKKTGRVLDNSDILLILVQRSRALECLENDKSKTVEECKKETALQNY</sequence>
<organism>
    <name type="scientific">Acidianus filamentous virus 1 (isolate United States/Yellowstone)</name>
    <name type="common">AFV-1</name>
    <dbReference type="NCBI Taxonomy" id="654909"/>
    <lineage>
        <taxon>Viruses</taxon>
        <taxon>Adnaviria</taxon>
        <taxon>Zilligvirae</taxon>
        <taxon>Taleaviricota</taxon>
        <taxon>Tokiviricetes</taxon>
        <taxon>Ligamenvirales</taxon>
        <taxon>Ungulaviridae</taxon>
        <taxon>Captovirus</taxon>
        <taxon>Acidianus filamentous virus 1</taxon>
    </lineage>
</organism>
<protein>
    <recommendedName>
        <fullName>Uncharacterized protein ORF74</fullName>
    </recommendedName>
</protein>
<gene>
    <name type="ORF">ORF74</name>
</gene>
<accession>Q70LD5</accession>
<dbReference type="EMBL" id="AJ567472">
    <property type="protein sequence ID" value="CAD98945.1"/>
    <property type="molecule type" value="Genomic_DNA"/>
</dbReference>
<dbReference type="RefSeq" id="YP_003741.1">
    <property type="nucleotide sequence ID" value="NC_005830.1"/>
</dbReference>
<dbReference type="KEGG" id="vg:2769175"/>
<dbReference type="Proteomes" id="UP000000514">
    <property type="component" value="Genome"/>
</dbReference>